<reference key="1">
    <citation type="journal article" date="2001" name="Lancet">
        <title>Whole genome sequencing of meticillin-resistant Staphylococcus aureus.</title>
        <authorList>
            <person name="Kuroda M."/>
            <person name="Ohta T."/>
            <person name="Uchiyama I."/>
            <person name="Baba T."/>
            <person name="Yuzawa H."/>
            <person name="Kobayashi I."/>
            <person name="Cui L."/>
            <person name="Oguchi A."/>
            <person name="Aoki K."/>
            <person name="Nagai Y."/>
            <person name="Lian J.-Q."/>
            <person name="Ito T."/>
            <person name="Kanamori M."/>
            <person name="Matsumaru H."/>
            <person name="Maruyama A."/>
            <person name="Murakami H."/>
            <person name="Hosoyama A."/>
            <person name="Mizutani-Ui Y."/>
            <person name="Takahashi N.K."/>
            <person name="Sawano T."/>
            <person name="Inoue R."/>
            <person name="Kaito C."/>
            <person name="Sekimizu K."/>
            <person name="Hirakawa H."/>
            <person name="Kuhara S."/>
            <person name="Goto S."/>
            <person name="Yabuzaki J."/>
            <person name="Kanehisa M."/>
            <person name="Yamashita A."/>
            <person name="Oshima K."/>
            <person name="Furuya K."/>
            <person name="Yoshino C."/>
            <person name="Shiba T."/>
            <person name="Hattori M."/>
            <person name="Ogasawara N."/>
            <person name="Hayashi H."/>
            <person name="Hiramatsu K."/>
        </authorList>
    </citation>
    <scope>NUCLEOTIDE SEQUENCE [LARGE SCALE GENOMIC DNA]</scope>
    <source>
        <strain>N315</strain>
    </source>
</reference>
<proteinExistence type="inferred from homology"/>
<dbReference type="EC" id="2.7.1.16" evidence="1"/>
<dbReference type="EMBL" id="BA000018">
    <property type="protein sequence ID" value="BAB41741.1"/>
    <property type="molecule type" value="Genomic_DNA"/>
</dbReference>
<dbReference type="PIR" id="B89823">
    <property type="entry name" value="B89823"/>
</dbReference>
<dbReference type="RefSeq" id="WP_000122354.1">
    <property type="nucleotide sequence ID" value="NC_002745.2"/>
</dbReference>
<dbReference type="SMR" id="P63550"/>
<dbReference type="EnsemblBacteria" id="BAB41741">
    <property type="protein sequence ID" value="BAB41741"/>
    <property type="gene ID" value="BAB41741"/>
</dbReference>
<dbReference type="KEGG" id="sau:SA0510"/>
<dbReference type="HOGENOM" id="CLU_009281_9_1_9"/>
<dbReference type="UniPathway" id="UPA00145">
    <property type="reaction ID" value="UER00566"/>
</dbReference>
<dbReference type="GO" id="GO:0005737">
    <property type="term" value="C:cytoplasm"/>
    <property type="evidence" value="ECO:0007669"/>
    <property type="project" value="TreeGrafter"/>
</dbReference>
<dbReference type="GO" id="GO:0005524">
    <property type="term" value="F:ATP binding"/>
    <property type="evidence" value="ECO:0007669"/>
    <property type="project" value="UniProtKB-KW"/>
</dbReference>
<dbReference type="GO" id="GO:0019150">
    <property type="term" value="F:D-ribulokinase activity"/>
    <property type="evidence" value="ECO:0007669"/>
    <property type="project" value="RHEA"/>
</dbReference>
<dbReference type="GO" id="GO:0008741">
    <property type="term" value="F:ribulokinase activity"/>
    <property type="evidence" value="ECO:0007669"/>
    <property type="project" value="UniProtKB-UniRule"/>
</dbReference>
<dbReference type="GO" id="GO:0019569">
    <property type="term" value="P:L-arabinose catabolic process to xylulose 5-phosphate"/>
    <property type="evidence" value="ECO:0007669"/>
    <property type="project" value="UniProtKB-UniRule"/>
</dbReference>
<dbReference type="CDD" id="cd07781">
    <property type="entry name" value="ASKHA_NBD_FGGY_L-RBK"/>
    <property type="match status" value="1"/>
</dbReference>
<dbReference type="Gene3D" id="1.20.58.2240">
    <property type="match status" value="1"/>
</dbReference>
<dbReference type="Gene3D" id="3.30.420.40">
    <property type="match status" value="1"/>
</dbReference>
<dbReference type="HAMAP" id="MF_00520">
    <property type="entry name" value="Ribulokinase"/>
    <property type="match status" value="1"/>
</dbReference>
<dbReference type="InterPro" id="IPR043129">
    <property type="entry name" value="ATPase_NBD"/>
</dbReference>
<dbReference type="InterPro" id="IPR000577">
    <property type="entry name" value="Carb_kinase_FGGY"/>
</dbReference>
<dbReference type="InterPro" id="IPR018485">
    <property type="entry name" value="FGGY_C"/>
</dbReference>
<dbReference type="InterPro" id="IPR018484">
    <property type="entry name" value="FGGY_N"/>
</dbReference>
<dbReference type="InterPro" id="IPR005929">
    <property type="entry name" value="Ribulokinase"/>
</dbReference>
<dbReference type="NCBIfam" id="NF003154">
    <property type="entry name" value="PRK04123.1"/>
    <property type="match status" value="1"/>
</dbReference>
<dbReference type="PANTHER" id="PTHR43435:SF4">
    <property type="entry name" value="FGGY CARBOHYDRATE KINASE DOMAIN-CONTAINING PROTEIN"/>
    <property type="match status" value="1"/>
</dbReference>
<dbReference type="PANTHER" id="PTHR43435">
    <property type="entry name" value="RIBULOKINASE"/>
    <property type="match status" value="1"/>
</dbReference>
<dbReference type="Pfam" id="PF02782">
    <property type="entry name" value="FGGY_C"/>
    <property type="match status" value="1"/>
</dbReference>
<dbReference type="Pfam" id="PF00370">
    <property type="entry name" value="FGGY_N"/>
    <property type="match status" value="1"/>
</dbReference>
<dbReference type="PIRSF" id="PIRSF000538">
    <property type="entry name" value="GlpK"/>
    <property type="match status" value="1"/>
</dbReference>
<dbReference type="SUPFAM" id="SSF53067">
    <property type="entry name" value="Actin-like ATPase domain"/>
    <property type="match status" value="2"/>
</dbReference>
<feature type="chain" id="PRO_0000198368" description="Ribulokinase">
    <location>
        <begin position="1"/>
        <end position="545"/>
    </location>
</feature>
<sequence>MSYSIGIDYGTASGRVFLINTTNGQVVSKFVKPYTHGVIESELNGLKIPHTYALQNSNDYLEIMEEGISYIVRESKIDPVNIVGIGIDFTSSTIIFTDENLNPVHNLKQFKNNPHAYVKLWKHHGAYKEAEKLYQTAIENNNKWLGHYGYNVSSEWMIPKIMEVMNRAPEIMEKTAYIMEAGDWIVNKLTNKNVRSNCGLGFKAFWEEETGFHYDLFDKIDPKLSKVIQDKVSAPVVNIGEVVGKLDDKMAQKLGLSKETMVSPFIIDAHASLLGIGSEKDKEMTMVMGTSTCHLMLNEKQHQVPGISGSVKGAIIPELFAYEAGQSAVGDLFEYVAKQAPKSYVDEAANRNMTVFELMNEKIKHQMPGESGLIALDWHNGNRSVLSDSNLTGCIFGLTLQTKHEDIYRAYLEATAFGTKMIMQQYQDWHMEVEKVFACGGIPKKNAVMMDIYANVLNKKLIVMDSEYAPAIGAAILGAVSGGAHNSINDAVDAMKEPILYEINPEAEKVQRYETLFKAYKALHDIHGYKKANIMKDIQSLRVEG</sequence>
<keyword id="KW-0054">Arabinose catabolism</keyword>
<keyword id="KW-0067">ATP-binding</keyword>
<keyword id="KW-0119">Carbohydrate metabolism</keyword>
<keyword id="KW-0418">Kinase</keyword>
<keyword id="KW-0547">Nucleotide-binding</keyword>
<keyword id="KW-0808">Transferase</keyword>
<evidence type="ECO:0000255" key="1">
    <source>
        <dbReference type="HAMAP-Rule" id="MF_00520"/>
    </source>
</evidence>
<accession>P63550</accession>
<accession>Q99W57</accession>
<protein>
    <recommendedName>
        <fullName evidence="1">Ribulokinase</fullName>
        <ecNumber evidence="1">2.7.1.16</ecNumber>
    </recommendedName>
</protein>
<gene>
    <name evidence="1" type="primary">araB</name>
    <name type="ordered locus">SA0510</name>
</gene>
<comment type="catalytic activity">
    <reaction evidence="1">
        <text>D-ribulose + ATP = D-ribulose 5-phosphate + ADP + H(+)</text>
        <dbReference type="Rhea" id="RHEA:17601"/>
        <dbReference type="ChEBI" id="CHEBI:15378"/>
        <dbReference type="ChEBI" id="CHEBI:17173"/>
        <dbReference type="ChEBI" id="CHEBI:30616"/>
        <dbReference type="ChEBI" id="CHEBI:58121"/>
        <dbReference type="ChEBI" id="CHEBI:456216"/>
        <dbReference type="EC" id="2.7.1.16"/>
    </reaction>
</comment>
<comment type="catalytic activity">
    <reaction evidence="1">
        <text>L-ribulose + ATP = L-ribulose 5-phosphate + ADP + H(+)</text>
        <dbReference type="Rhea" id="RHEA:22072"/>
        <dbReference type="ChEBI" id="CHEBI:15378"/>
        <dbReference type="ChEBI" id="CHEBI:16880"/>
        <dbReference type="ChEBI" id="CHEBI:30616"/>
        <dbReference type="ChEBI" id="CHEBI:58226"/>
        <dbReference type="ChEBI" id="CHEBI:456216"/>
        <dbReference type="EC" id="2.7.1.16"/>
    </reaction>
</comment>
<comment type="pathway">
    <text evidence="1">Carbohydrate degradation; L-arabinose degradation via L-ribulose; D-xylulose 5-phosphate from L-arabinose (bacterial route): step 2/3.</text>
</comment>
<comment type="similarity">
    <text evidence="1">Belongs to the ribulokinase family.</text>
</comment>
<organism>
    <name type="scientific">Staphylococcus aureus (strain N315)</name>
    <dbReference type="NCBI Taxonomy" id="158879"/>
    <lineage>
        <taxon>Bacteria</taxon>
        <taxon>Bacillati</taxon>
        <taxon>Bacillota</taxon>
        <taxon>Bacilli</taxon>
        <taxon>Bacillales</taxon>
        <taxon>Staphylococcaceae</taxon>
        <taxon>Staphylococcus</taxon>
    </lineage>
</organism>
<name>ARAB_STAAN</name>